<name>SYL_SHIFL</name>
<comment type="catalytic activity">
    <reaction evidence="1">
        <text>tRNA(Leu) + L-leucine + ATP = L-leucyl-tRNA(Leu) + AMP + diphosphate</text>
        <dbReference type="Rhea" id="RHEA:11688"/>
        <dbReference type="Rhea" id="RHEA-COMP:9613"/>
        <dbReference type="Rhea" id="RHEA-COMP:9622"/>
        <dbReference type="ChEBI" id="CHEBI:30616"/>
        <dbReference type="ChEBI" id="CHEBI:33019"/>
        <dbReference type="ChEBI" id="CHEBI:57427"/>
        <dbReference type="ChEBI" id="CHEBI:78442"/>
        <dbReference type="ChEBI" id="CHEBI:78494"/>
        <dbReference type="ChEBI" id="CHEBI:456215"/>
        <dbReference type="EC" id="6.1.1.4"/>
    </reaction>
</comment>
<comment type="subcellular location">
    <subcellularLocation>
        <location evidence="1">Cytoplasm</location>
    </subcellularLocation>
</comment>
<comment type="similarity">
    <text evidence="1">Belongs to the class-I aminoacyl-tRNA synthetase family.</text>
</comment>
<organism>
    <name type="scientific">Shigella flexneri</name>
    <dbReference type="NCBI Taxonomy" id="623"/>
    <lineage>
        <taxon>Bacteria</taxon>
        <taxon>Pseudomonadati</taxon>
        <taxon>Pseudomonadota</taxon>
        <taxon>Gammaproteobacteria</taxon>
        <taxon>Enterobacterales</taxon>
        <taxon>Enterobacteriaceae</taxon>
        <taxon>Shigella</taxon>
    </lineage>
</organism>
<proteinExistence type="inferred from homology"/>
<evidence type="ECO:0000255" key="1">
    <source>
        <dbReference type="HAMAP-Rule" id="MF_00049"/>
    </source>
</evidence>
<keyword id="KW-0030">Aminoacyl-tRNA synthetase</keyword>
<keyword id="KW-0067">ATP-binding</keyword>
<keyword id="KW-0963">Cytoplasm</keyword>
<keyword id="KW-0436">Ligase</keyword>
<keyword id="KW-0547">Nucleotide-binding</keyword>
<keyword id="KW-0648">Protein biosynthesis</keyword>
<keyword id="KW-1185">Reference proteome</keyword>
<reference key="1">
    <citation type="journal article" date="2002" name="Nucleic Acids Res.">
        <title>Genome sequence of Shigella flexneri 2a: insights into pathogenicity through comparison with genomes of Escherichia coli K12 and O157.</title>
        <authorList>
            <person name="Jin Q."/>
            <person name="Yuan Z."/>
            <person name="Xu J."/>
            <person name="Wang Y."/>
            <person name="Shen Y."/>
            <person name="Lu W."/>
            <person name="Wang J."/>
            <person name="Liu H."/>
            <person name="Yang J."/>
            <person name="Yang F."/>
            <person name="Zhang X."/>
            <person name="Zhang J."/>
            <person name="Yang G."/>
            <person name="Wu H."/>
            <person name="Qu D."/>
            <person name="Dong J."/>
            <person name="Sun L."/>
            <person name="Xue Y."/>
            <person name="Zhao A."/>
            <person name="Gao Y."/>
            <person name="Zhu J."/>
            <person name="Kan B."/>
            <person name="Ding K."/>
            <person name="Chen S."/>
            <person name="Cheng H."/>
            <person name="Yao Z."/>
            <person name="He B."/>
            <person name="Chen R."/>
            <person name="Ma D."/>
            <person name="Qiang B."/>
            <person name="Wen Y."/>
            <person name="Hou Y."/>
            <person name="Yu J."/>
        </authorList>
    </citation>
    <scope>NUCLEOTIDE SEQUENCE [LARGE SCALE GENOMIC DNA]</scope>
    <source>
        <strain>301 / Serotype 2a</strain>
    </source>
</reference>
<reference key="2">
    <citation type="journal article" date="2003" name="Infect. Immun.">
        <title>Complete genome sequence and comparative genomics of Shigella flexneri serotype 2a strain 2457T.</title>
        <authorList>
            <person name="Wei J."/>
            <person name="Goldberg M.B."/>
            <person name="Burland V."/>
            <person name="Venkatesan M.M."/>
            <person name="Deng W."/>
            <person name="Fournier G."/>
            <person name="Mayhew G.F."/>
            <person name="Plunkett G. III"/>
            <person name="Rose D.J."/>
            <person name="Darling A."/>
            <person name="Mau B."/>
            <person name="Perna N.T."/>
            <person name="Payne S.M."/>
            <person name="Runyen-Janecky L.J."/>
            <person name="Zhou S."/>
            <person name="Schwartz D.C."/>
            <person name="Blattner F.R."/>
        </authorList>
    </citation>
    <scope>NUCLEOTIDE SEQUENCE [LARGE SCALE GENOMIC DNA]</scope>
    <source>
        <strain>ATCC 700930 / 2457T / Serotype 2a</strain>
    </source>
</reference>
<gene>
    <name evidence="1" type="primary">leuS</name>
    <name type="ordered locus">SF0639</name>
    <name type="ordered locus">S0661</name>
</gene>
<dbReference type="EC" id="6.1.1.4" evidence="1"/>
<dbReference type="EMBL" id="AE005674">
    <property type="protein sequence ID" value="AAN42275.2"/>
    <property type="molecule type" value="Genomic_DNA"/>
</dbReference>
<dbReference type="EMBL" id="AE014073">
    <property type="protein sequence ID" value="AAP16146.1"/>
    <property type="molecule type" value="Genomic_DNA"/>
</dbReference>
<dbReference type="RefSeq" id="NP_706568.2">
    <property type="nucleotide sequence ID" value="NC_004337.2"/>
</dbReference>
<dbReference type="RefSeq" id="WP_001157892.1">
    <property type="nucleotide sequence ID" value="NZ_WPGW01000002.1"/>
</dbReference>
<dbReference type="SMR" id="Q83LX5"/>
<dbReference type="STRING" id="198214.SF0639"/>
<dbReference type="PaxDb" id="198214-SF0639"/>
<dbReference type="GeneID" id="1023618"/>
<dbReference type="KEGG" id="sfl:SF0639"/>
<dbReference type="KEGG" id="sfx:S0661"/>
<dbReference type="PATRIC" id="fig|198214.7.peg.746"/>
<dbReference type="HOGENOM" id="CLU_004427_0_0_6"/>
<dbReference type="Proteomes" id="UP000001006">
    <property type="component" value="Chromosome"/>
</dbReference>
<dbReference type="Proteomes" id="UP000002673">
    <property type="component" value="Chromosome"/>
</dbReference>
<dbReference type="GO" id="GO:0005829">
    <property type="term" value="C:cytosol"/>
    <property type="evidence" value="ECO:0007669"/>
    <property type="project" value="TreeGrafter"/>
</dbReference>
<dbReference type="GO" id="GO:0002161">
    <property type="term" value="F:aminoacyl-tRNA deacylase activity"/>
    <property type="evidence" value="ECO:0007669"/>
    <property type="project" value="InterPro"/>
</dbReference>
<dbReference type="GO" id="GO:0005524">
    <property type="term" value="F:ATP binding"/>
    <property type="evidence" value="ECO:0007669"/>
    <property type="project" value="UniProtKB-UniRule"/>
</dbReference>
<dbReference type="GO" id="GO:0004823">
    <property type="term" value="F:leucine-tRNA ligase activity"/>
    <property type="evidence" value="ECO:0007669"/>
    <property type="project" value="UniProtKB-UniRule"/>
</dbReference>
<dbReference type="GO" id="GO:0006429">
    <property type="term" value="P:leucyl-tRNA aminoacylation"/>
    <property type="evidence" value="ECO:0007669"/>
    <property type="project" value="UniProtKB-UniRule"/>
</dbReference>
<dbReference type="CDD" id="cd07958">
    <property type="entry name" value="Anticodon_Ia_Leu_BEm"/>
    <property type="match status" value="1"/>
</dbReference>
<dbReference type="CDD" id="cd00812">
    <property type="entry name" value="LeuRS_core"/>
    <property type="match status" value="1"/>
</dbReference>
<dbReference type="FunFam" id="1.10.730.10:FF:000002">
    <property type="entry name" value="Leucine--tRNA ligase"/>
    <property type="match status" value="2"/>
</dbReference>
<dbReference type="FunFam" id="2.20.28.290:FF:000001">
    <property type="entry name" value="Leucine--tRNA ligase"/>
    <property type="match status" value="1"/>
</dbReference>
<dbReference type="FunFam" id="3.10.20.590:FF:000001">
    <property type="entry name" value="Leucine--tRNA ligase"/>
    <property type="match status" value="1"/>
</dbReference>
<dbReference type="FunFam" id="3.40.50.620:FF:000003">
    <property type="entry name" value="Leucine--tRNA ligase"/>
    <property type="match status" value="1"/>
</dbReference>
<dbReference type="FunFam" id="3.40.50.620:FF:000124">
    <property type="entry name" value="Leucine--tRNA ligase"/>
    <property type="match status" value="1"/>
</dbReference>
<dbReference type="FunFam" id="3.90.740.10:FF:000012">
    <property type="entry name" value="Leucine--tRNA ligase"/>
    <property type="match status" value="1"/>
</dbReference>
<dbReference type="Gene3D" id="2.20.28.290">
    <property type="match status" value="1"/>
</dbReference>
<dbReference type="Gene3D" id="3.10.20.590">
    <property type="match status" value="1"/>
</dbReference>
<dbReference type="Gene3D" id="3.40.50.620">
    <property type="entry name" value="HUPs"/>
    <property type="match status" value="2"/>
</dbReference>
<dbReference type="Gene3D" id="1.10.730.10">
    <property type="entry name" value="Isoleucyl-tRNA Synthetase, Domain 1"/>
    <property type="match status" value="1"/>
</dbReference>
<dbReference type="HAMAP" id="MF_00049_B">
    <property type="entry name" value="Leu_tRNA_synth_B"/>
    <property type="match status" value="1"/>
</dbReference>
<dbReference type="InterPro" id="IPR001412">
    <property type="entry name" value="aa-tRNA-synth_I_CS"/>
</dbReference>
<dbReference type="InterPro" id="IPR002300">
    <property type="entry name" value="aa-tRNA-synth_Ia"/>
</dbReference>
<dbReference type="InterPro" id="IPR002302">
    <property type="entry name" value="Leu-tRNA-ligase"/>
</dbReference>
<dbReference type="InterPro" id="IPR025709">
    <property type="entry name" value="Leu_tRNA-synth_edit"/>
</dbReference>
<dbReference type="InterPro" id="IPR013155">
    <property type="entry name" value="M/V/L/I-tRNA-synth_anticd-bd"/>
</dbReference>
<dbReference type="InterPro" id="IPR015413">
    <property type="entry name" value="Methionyl/Leucyl_tRNA_Synth"/>
</dbReference>
<dbReference type="InterPro" id="IPR014729">
    <property type="entry name" value="Rossmann-like_a/b/a_fold"/>
</dbReference>
<dbReference type="InterPro" id="IPR009080">
    <property type="entry name" value="tRNAsynth_Ia_anticodon-bd"/>
</dbReference>
<dbReference type="InterPro" id="IPR009008">
    <property type="entry name" value="Val/Leu/Ile-tRNA-synth_edit"/>
</dbReference>
<dbReference type="NCBIfam" id="TIGR00396">
    <property type="entry name" value="leuS_bact"/>
    <property type="match status" value="1"/>
</dbReference>
<dbReference type="PANTHER" id="PTHR43740:SF2">
    <property type="entry name" value="LEUCINE--TRNA LIGASE, MITOCHONDRIAL"/>
    <property type="match status" value="1"/>
</dbReference>
<dbReference type="PANTHER" id="PTHR43740">
    <property type="entry name" value="LEUCYL-TRNA SYNTHETASE"/>
    <property type="match status" value="1"/>
</dbReference>
<dbReference type="Pfam" id="PF08264">
    <property type="entry name" value="Anticodon_1"/>
    <property type="match status" value="1"/>
</dbReference>
<dbReference type="Pfam" id="PF00133">
    <property type="entry name" value="tRNA-synt_1"/>
    <property type="match status" value="2"/>
</dbReference>
<dbReference type="Pfam" id="PF13603">
    <property type="entry name" value="tRNA-synt_1_2"/>
    <property type="match status" value="1"/>
</dbReference>
<dbReference type="Pfam" id="PF09334">
    <property type="entry name" value="tRNA-synt_1g"/>
    <property type="match status" value="1"/>
</dbReference>
<dbReference type="PRINTS" id="PR00985">
    <property type="entry name" value="TRNASYNTHLEU"/>
</dbReference>
<dbReference type="SUPFAM" id="SSF47323">
    <property type="entry name" value="Anticodon-binding domain of a subclass of class I aminoacyl-tRNA synthetases"/>
    <property type="match status" value="1"/>
</dbReference>
<dbReference type="SUPFAM" id="SSF52374">
    <property type="entry name" value="Nucleotidylyl transferase"/>
    <property type="match status" value="1"/>
</dbReference>
<dbReference type="SUPFAM" id="SSF50677">
    <property type="entry name" value="ValRS/IleRS/LeuRS editing domain"/>
    <property type="match status" value="1"/>
</dbReference>
<dbReference type="PROSITE" id="PS00178">
    <property type="entry name" value="AA_TRNA_LIGASE_I"/>
    <property type="match status" value="1"/>
</dbReference>
<sequence length="860" mass="97251">MQEQYRPEEIESKVQLHWDEKRTFEVTEDESKEKYYCLSMLPYPSGRLHMGHVRNYTIGDVIARYQRMLGKNVLQPIGWDAFGLPAEGAAVKNNTAPAPWTYDNIAYMKNQLKMLGFGYDWSRELATCTPEYYRWEQKFFTELYKKGLVYKKTSAVNWCPNDQTVLANEQVIDGCCWRCDTKVERKEIPQWFIKITAYADELLNDLDKLDHWPDTVKTMQRNWIGRSEGVEITFNVNDYDNTLTVYTTRPDTFMGCTYLAVAAGHPLAQKAAENNPELAAFIDECRNTKVAEAEMATMEKKGVDTGFKAVHPLTGEEIPVWAANFVLMEYGTGAVMAVPGHDQRDYEFASKYGLNIKPVILAADGSEPDLSQQALTEKGVLFNSGEFNGLDHEAAFNAIADKLTAMGVGERKVNYRLRDWGVSRQRYWGAPIPMVTLEDGTVMPTPDDQLPVILPEDVVMDGITSPIKADPEWAKTTVNGMPALRETDTFDTFMESSWYYARYTCPEYKEGMLDSEAANYWLPVDIYIGGIEHAIMHLLYFRFFHKLMRDAGMVNSDEPAKQLLCQGMVLADAFYYVGENGERNWVSPVDAIVERDEKGRIVKAKDAAGHELVYTGMSKMSKSKNNGIDPQVMVERYGADTVRLFMMFASPADMTLEWQESGVEGANRFLKRVWKLVYEHTAKGDVAALNVDALTEDQKALRRDVHKTIAKVTDDIGRRQTFNTAIAAIMELMNKLAKAPTDGEQDRALMQEALQAVVRMLNPFTPHICFTLWQELKGEGDIDNAPWPVADEKAMVEDSTLVVVQVNGKVRAKITVPVDATEEQVRERAGQEHLVAKYLDGVTVRKVIYVPGKLLNLVVG</sequence>
<feature type="chain" id="PRO_0000152080" description="Leucine--tRNA ligase">
    <location>
        <begin position="1"/>
        <end position="860"/>
    </location>
</feature>
<feature type="short sequence motif" description="'HIGH' region">
    <location>
        <begin position="73"/>
        <end position="83"/>
    </location>
</feature>
<feature type="short sequence motif" description="'KMSKS' region">
    <location>
        <begin position="650"/>
        <end position="654"/>
    </location>
</feature>
<feature type="binding site" evidence="1">
    <location>
        <position position="653"/>
    </location>
    <ligand>
        <name>ATP</name>
        <dbReference type="ChEBI" id="CHEBI:30616"/>
    </ligand>
</feature>
<accession>Q83LX5</accession>
<accession>Q7UDD2</accession>
<protein>
    <recommendedName>
        <fullName evidence="1">Leucine--tRNA ligase</fullName>
        <ecNumber evidence="1">6.1.1.4</ecNumber>
    </recommendedName>
    <alternativeName>
        <fullName evidence="1">Leucyl-tRNA synthetase</fullName>
        <shortName evidence="1">LeuRS</shortName>
    </alternativeName>
</protein>